<proteinExistence type="evidence at protein level"/>
<keyword id="KW-0025">Alternative splicing</keyword>
<keyword id="KW-0963">Cytoplasm</keyword>
<keyword id="KW-0472">Membrane</keyword>
<keyword id="KW-0488">Methylation</keyword>
<keyword id="KW-0539">Nucleus</keyword>
<keyword id="KW-0597">Phosphoprotein</keyword>
<keyword id="KW-1185">Reference proteome</keyword>
<keyword id="KW-0727">SH2 domain</keyword>
<gene>
    <name type="primary">Sh2b1</name>
    <name type="synonym">Sh2-b</name>
    <name type="synonym">Sh2bpsm1</name>
</gene>
<organism>
    <name type="scientific">Rattus norvegicus</name>
    <name type="common">Rat</name>
    <dbReference type="NCBI Taxonomy" id="10116"/>
    <lineage>
        <taxon>Eukaryota</taxon>
        <taxon>Metazoa</taxon>
        <taxon>Chordata</taxon>
        <taxon>Craniata</taxon>
        <taxon>Vertebrata</taxon>
        <taxon>Euteleostomi</taxon>
        <taxon>Mammalia</taxon>
        <taxon>Eutheria</taxon>
        <taxon>Euarchontoglires</taxon>
        <taxon>Glires</taxon>
        <taxon>Rodentia</taxon>
        <taxon>Myomorpha</taxon>
        <taxon>Muroidea</taxon>
        <taxon>Muridae</taxon>
        <taxon>Murinae</taxon>
        <taxon>Rattus</taxon>
    </lineage>
</organism>
<protein>
    <recommendedName>
        <fullName>SH2B adapter protein 1</fullName>
    </recommendedName>
    <alternativeName>
        <fullName>FceRI gamma-chain-interacting protein SH2-B</fullName>
    </alternativeName>
    <alternativeName>
        <fullName>SH2 domain-containing protein 1B</fullName>
    </alternativeName>
    <alternativeName>
        <fullName>SH2-B PH domain-containing signaling mediator 1</fullName>
    </alternativeName>
</protein>
<dbReference type="EMBL" id="U57391">
    <property type="protein sequence ID" value="AAC52601.1"/>
    <property type="molecule type" value="mRNA"/>
</dbReference>
<dbReference type="EMBL" id="AF047577">
    <property type="protein sequence ID" value="AAC04575.1"/>
    <property type="molecule type" value="mRNA"/>
</dbReference>
<dbReference type="RefSeq" id="NP_001041645.1">
    <property type="nucleotide sequence ID" value="NM_001048180.1"/>
</dbReference>
<dbReference type="RefSeq" id="NP_604451.2">
    <molecule id="Q62985-1"/>
    <property type="nucleotide sequence ID" value="NM_134456.3"/>
</dbReference>
<dbReference type="RefSeq" id="XP_006230415.1">
    <molecule id="Q62985-1"/>
    <property type="nucleotide sequence ID" value="XM_006230353.5"/>
</dbReference>
<dbReference type="RefSeq" id="XP_006230416.1">
    <molecule id="Q62985-1"/>
    <property type="nucleotide sequence ID" value="XM_006230354.5"/>
</dbReference>
<dbReference type="SMR" id="Q62985"/>
<dbReference type="BioGRID" id="250140">
    <property type="interactions" value="5"/>
</dbReference>
<dbReference type="FunCoup" id="Q62985">
    <property type="interactions" value="3056"/>
</dbReference>
<dbReference type="IntAct" id="Q62985">
    <property type="interactions" value="37"/>
</dbReference>
<dbReference type="MINT" id="Q62985"/>
<dbReference type="STRING" id="10116.ENSRNOP00000066048"/>
<dbReference type="iPTMnet" id="Q62985"/>
<dbReference type="PhosphoSitePlus" id="Q62985"/>
<dbReference type="PaxDb" id="10116-ENSRNOP00000066048"/>
<dbReference type="GeneID" id="89817"/>
<dbReference type="KEGG" id="rno:89817"/>
<dbReference type="AGR" id="RGD:620132"/>
<dbReference type="CTD" id="25970"/>
<dbReference type="RGD" id="620132">
    <property type="gene designation" value="Sh2b1"/>
</dbReference>
<dbReference type="VEuPathDB" id="HostDB:ENSRNOG00000049181"/>
<dbReference type="eggNOG" id="ENOG502QT43">
    <property type="taxonomic scope" value="Eukaryota"/>
</dbReference>
<dbReference type="InParanoid" id="Q62985"/>
<dbReference type="OrthoDB" id="82287at9989"/>
<dbReference type="PhylomeDB" id="Q62985"/>
<dbReference type="Reactome" id="R-RNO-1170546">
    <property type="pathway name" value="Prolactin receptor signaling"/>
</dbReference>
<dbReference type="Reactome" id="R-RNO-982772">
    <property type="pathway name" value="Growth hormone receptor signaling"/>
</dbReference>
<dbReference type="Reactome" id="R-RNO-983231">
    <property type="pathway name" value="Factors involved in megakaryocyte development and platelet production"/>
</dbReference>
<dbReference type="PRO" id="PR:Q62985"/>
<dbReference type="Proteomes" id="UP000002494">
    <property type="component" value="Chromosome 1"/>
</dbReference>
<dbReference type="Bgee" id="ENSRNOG00000049181">
    <property type="expression patterns" value="Expressed in skeletal muscle tissue and 19 other cell types or tissues"/>
</dbReference>
<dbReference type="ExpressionAtlas" id="Q62985">
    <property type="expression patterns" value="baseline and differential"/>
</dbReference>
<dbReference type="GO" id="GO:0005737">
    <property type="term" value="C:cytoplasm"/>
    <property type="evidence" value="ECO:0007669"/>
    <property type="project" value="UniProtKB-SubCell"/>
</dbReference>
<dbReference type="GO" id="GO:0005634">
    <property type="term" value="C:nucleus"/>
    <property type="evidence" value="ECO:0007669"/>
    <property type="project" value="UniProtKB-SubCell"/>
</dbReference>
<dbReference type="GO" id="GO:0005886">
    <property type="term" value="C:plasma membrane"/>
    <property type="evidence" value="ECO:0000318"/>
    <property type="project" value="GO_Central"/>
</dbReference>
<dbReference type="GO" id="GO:0005068">
    <property type="term" value="F:transmembrane receptor protein tyrosine kinase adaptor activity"/>
    <property type="evidence" value="ECO:0000318"/>
    <property type="project" value="GO_Central"/>
</dbReference>
<dbReference type="GO" id="GO:0048870">
    <property type="term" value="P:cell motility"/>
    <property type="evidence" value="ECO:0000266"/>
    <property type="project" value="RGD"/>
</dbReference>
<dbReference type="GO" id="GO:0035556">
    <property type="term" value="P:intracellular signal transduction"/>
    <property type="evidence" value="ECO:0000318"/>
    <property type="project" value="GO_Central"/>
</dbReference>
<dbReference type="GO" id="GO:0030032">
    <property type="term" value="P:lamellipodium assembly"/>
    <property type="evidence" value="ECO:0000266"/>
    <property type="project" value="RGD"/>
</dbReference>
<dbReference type="GO" id="GO:0045840">
    <property type="term" value="P:positive regulation of mitotic nuclear division"/>
    <property type="evidence" value="ECO:0000266"/>
    <property type="project" value="RGD"/>
</dbReference>
<dbReference type="GO" id="GO:0060391">
    <property type="term" value="P:positive regulation of SMAD protein signal transduction"/>
    <property type="evidence" value="ECO:0000266"/>
    <property type="project" value="RGD"/>
</dbReference>
<dbReference type="GO" id="GO:2000278">
    <property type="term" value="P:regulation of DNA biosynthetic process"/>
    <property type="evidence" value="ECO:0000266"/>
    <property type="project" value="RGD"/>
</dbReference>
<dbReference type="CDD" id="cd01231">
    <property type="entry name" value="PH_SH2B_family"/>
    <property type="match status" value="1"/>
</dbReference>
<dbReference type="CDD" id="cd10346">
    <property type="entry name" value="SH2_SH2B_family"/>
    <property type="match status" value="1"/>
</dbReference>
<dbReference type="FunFam" id="3.30.505.10:FF:000008">
    <property type="entry name" value="SH2B adapter protein 1 isoform 2"/>
    <property type="match status" value="1"/>
</dbReference>
<dbReference type="FunFam" id="2.30.29.30:FF:000192">
    <property type="entry name" value="SH2B adapter protein 1 isoform X1"/>
    <property type="match status" value="1"/>
</dbReference>
<dbReference type="Gene3D" id="6.10.140.110">
    <property type="match status" value="1"/>
</dbReference>
<dbReference type="Gene3D" id="2.30.29.30">
    <property type="entry name" value="Pleckstrin-homology domain (PH domain)/Phosphotyrosine-binding domain (PTB)"/>
    <property type="match status" value="1"/>
</dbReference>
<dbReference type="Gene3D" id="3.30.505.10">
    <property type="entry name" value="SH2 domain"/>
    <property type="match status" value="1"/>
</dbReference>
<dbReference type="InterPro" id="IPR011993">
    <property type="entry name" value="PH-like_dom_sf"/>
</dbReference>
<dbReference type="InterPro" id="IPR001849">
    <property type="entry name" value="PH_domain"/>
</dbReference>
<dbReference type="InterPro" id="IPR015012">
    <property type="entry name" value="Phe_ZIP"/>
</dbReference>
<dbReference type="InterPro" id="IPR036290">
    <property type="entry name" value="Phe_ZIP_sf"/>
</dbReference>
<dbReference type="InterPro" id="IPR000980">
    <property type="entry name" value="SH2"/>
</dbReference>
<dbReference type="InterPro" id="IPR036860">
    <property type="entry name" value="SH2_dom_sf"/>
</dbReference>
<dbReference type="InterPro" id="IPR030523">
    <property type="entry name" value="SH2B"/>
</dbReference>
<dbReference type="InterPro" id="IPR035057">
    <property type="entry name" value="SH2B1_SH2"/>
</dbReference>
<dbReference type="PANTHER" id="PTHR10872">
    <property type="entry name" value="SH2B ADAPTER PROTEIN"/>
    <property type="match status" value="1"/>
</dbReference>
<dbReference type="PANTHER" id="PTHR10872:SF3">
    <property type="entry name" value="SH2B ADAPTER PROTEIN 1"/>
    <property type="match status" value="1"/>
</dbReference>
<dbReference type="Pfam" id="PF00169">
    <property type="entry name" value="PH"/>
    <property type="match status" value="1"/>
</dbReference>
<dbReference type="Pfam" id="PF08916">
    <property type="entry name" value="Phe_ZIP"/>
    <property type="match status" value="1"/>
</dbReference>
<dbReference type="Pfam" id="PF00017">
    <property type="entry name" value="SH2"/>
    <property type="match status" value="1"/>
</dbReference>
<dbReference type="PRINTS" id="PR00401">
    <property type="entry name" value="SH2DOMAIN"/>
</dbReference>
<dbReference type="SMART" id="SM00233">
    <property type="entry name" value="PH"/>
    <property type="match status" value="1"/>
</dbReference>
<dbReference type="SMART" id="SM00252">
    <property type="entry name" value="SH2"/>
    <property type="match status" value="1"/>
</dbReference>
<dbReference type="SUPFAM" id="SSF50729">
    <property type="entry name" value="PH domain-like"/>
    <property type="match status" value="1"/>
</dbReference>
<dbReference type="SUPFAM" id="SSF109805">
    <property type="entry name" value="Phenylalanine zipper"/>
    <property type="match status" value="1"/>
</dbReference>
<dbReference type="SUPFAM" id="SSF55550">
    <property type="entry name" value="SH2 domain"/>
    <property type="match status" value="1"/>
</dbReference>
<dbReference type="PROSITE" id="PS50001">
    <property type="entry name" value="SH2"/>
    <property type="match status" value="1"/>
</dbReference>
<feature type="chain" id="PRO_0000323611" description="SH2B adapter protein 1">
    <location>
        <begin position="1"/>
        <end position="756"/>
    </location>
</feature>
<feature type="domain" description="PH">
    <location>
        <begin position="247"/>
        <end position="376"/>
    </location>
</feature>
<feature type="domain" description="SH2" evidence="4">
    <location>
        <begin position="527"/>
        <end position="625"/>
    </location>
</feature>
<feature type="region of interest" description="Interaction with JAK2 (low-affinity binding; independent of JAK2 phosphorylation)">
    <location>
        <begin position="1"/>
        <end position="555"/>
    </location>
</feature>
<feature type="region of interest" description="Disordered" evidence="5">
    <location>
        <begin position="1"/>
        <end position="27"/>
    </location>
</feature>
<feature type="region of interest" description="Required for self-association" evidence="1">
    <location>
        <begin position="24"/>
        <end position="85"/>
    </location>
</feature>
<feature type="region of interest" description="Interaction with RAC1" evidence="11">
    <location>
        <begin position="85"/>
        <end position="196"/>
    </location>
</feature>
<feature type="region of interest" description="Required for NGF signaling">
    <location>
        <begin position="100"/>
        <end position="243"/>
    </location>
</feature>
<feature type="region of interest" description="Disordered" evidence="5">
    <location>
        <begin position="124"/>
        <end position="152"/>
    </location>
</feature>
<feature type="region of interest" description="Disordered" evidence="5">
    <location>
        <begin position="175"/>
        <end position="222"/>
    </location>
</feature>
<feature type="region of interest" description="Required for nuclear localization">
    <location>
        <begin position="224"/>
        <end position="233"/>
    </location>
</feature>
<feature type="region of interest" description="Disordered" evidence="5">
    <location>
        <begin position="262"/>
        <end position="285"/>
    </location>
</feature>
<feature type="region of interest" description="Disordered" evidence="5">
    <location>
        <begin position="418"/>
        <end position="455"/>
    </location>
</feature>
<feature type="region of interest" description="Disordered" evidence="5">
    <location>
        <begin position="468"/>
        <end position="503"/>
    </location>
</feature>
<feature type="region of interest" description="Disordered" evidence="5">
    <location>
        <begin position="626"/>
        <end position="691"/>
    </location>
</feature>
<feature type="region of interest" description="Disordered" evidence="5">
    <location>
        <begin position="736"/>
        <end position="756"/>
    </location>
</feature>
<feature type="compositionally biased region" description="Pro residues" evidence="5">
    <location>
        <begin position="13"/>
        <end position="25"/>
    </location>
</feature>
<feature type="compositionally biased region" description="Low complexity" evidence="5">
    <location>
        <begin position="133"/>
        <end position="146"/>
    </location>
</feature>
<feature type="compositionally biased region" description="Polar residues" evidence="5">
    <location>
        <begin position="178"/>
        <end position="190"/>
    </location>
</feature>
<feature type="compositionally biased region" description="Gly residues" evidence="5">
    <location>
        <begin position="268"/>
        <end position="284"/>
    </location>
</feature>
<feature type="compositionally biased region" description="Pro residues" evidence="5">
    <location>
        <begin position="642"/>
        <end position="654"/>
    </location>
</feature>
<feature type="compositionally biased region" description="Low complexity" evidence="5">
    <location>
        <begin position="657"/>
        <end position="672"/>
    </location>
</feature>
<feature type="compositionally biased region" description="Basic and acidic residues" evidence="5">
    <location>
        <begin position="673"/>
        <end position="682"/>
    </location>
</feature>
<feature type="modified residue" description="Phosphoserine" evidence="2">
    <location>
        <position position="88"/>
    </location>
</feature>
<feature type="modified residue" description="Phosphoserine; by MAPK1 or MAPK3; in vitro" evidence="7">
    <location>
        <position position="96"/>
    </location>
</feature>
<feature type="modified residue" description="Omega-N-methylarginine" evidence="3">
    <location>
        <position position="270"/>
    </location>
</feature>
<feature type="modified residue" description="Phosphoserine" evidence="2">
    <location>
        <position position="417"/>
    </location>
</feature>
<feature type="modified residue" description="Phosphoserine" evidence="2">
    <location>
        <position position="420"/>
    </location>
</feature>
<feature type="modified residue" description="Phosphotyrosine; by JAK1, JAK2 and PDGFR" evidence="13">
    <location>
        <position position="439"/>
    </location>
</feature>
<feature type="modified residue" description="Phosphotyrosine; by JAK1, JAK2" evidence="13">
    <location>
        <position position="494"/>
    </location>
</feature>
<feature type="splice variant" id="VSP_032045" description="In isoform 2." evidence="21">
    <original>ERSTSRDPTQPSEPPPWTDPPHPGAEEASGAPEVAAATAAAAKERQEKEKAGGGGVQEELVPMAELVPMAELEEAIAPGTEAQGGAGSSGDLEVSLMVQLQQLPLGGNGEEGGHPRAINNQYSFV</original>
    <variation>GREQAGSHAGVCEGDRCYPDASSTFLPFGASDCVTEHFP</variation>
    <location>
        <begin position="632"/>
        <end position="756"/>
    </location>
</feature>
<feature type="mutagenesis site" description="Reduces in vitro phosphorylation by MAPK1 and/or MAPK3." evidence="7">
    <original>S</original>
    <variation>A</variation>
    <location>
        <position position="96"/>
    </location>
</feature>
<feature type="mutagenesis site" description="Abolishes nuclear localization; when associated with A-233." evidence="14">
    <original>L</original>
    <variation>A</variation>
    <location>
        <position position="231"/>
    </location>
</feature>
<feature type="mutagenesis site" description="Abolishes nuclear localization; when associated with A-231." evidence="14">
    <original>L</original>
    <variation>A</variation>
    <location>
        <position position="233"/>
    </location>
</feature>
<feature type="mutagenesis site" description="Fails to enhance GH-induced membrane ruffling; when associated with F-494." evidence="13">
    <original>Y</original>
    <variation>F</variation>
    <location>
        <position position="439"/>
    </location>
</feature>
<feature type="mutagenesis site" description="Reduces phosphorylation by JAK1, JAK2 and PDGFRA." evidence="13">
    <original>Y</original>
    <variation>F</variation>
    <location>
        <position position="439"/>
    </location>
</feature>
<feature type="mutagenesis site" description="Fails to enhance GH-induced membrane ruffling; when associated with F-439." evidence="13">
    <original>Y</original>
    <variation>F</variation>
    <location>
        <position position="494"/>
    </location>
</feature>
<feature type="mutagenesis site" description="Reduces phosphorylation by JAK1 and JAK2." evidence="13">
    <original>Y</original>
    <variation>F</variation>
    <location>
        <position position="494"/>
    </location>
</feature>
<feature type="mutagenesis site" description="Reduces interaction with JAK2 and abolishes JAK2 kinase activity; reduces GH-stimulated cell motility; abolishes interaction with PDGFRA." evidence="6 8">
    <original>R</original>
    <variation>E</variation>
    <location>
        <position position="555"/>
    </location>
</feature>
<feature type="sequence conflict" description="In Ref. 2; AAC04575." evidence="22" ref="2">
    <original>R</original>
    <variation>K</variation>
    <location>
        <position position="211"/>
    </location>
</feature>
<accession>Q62985</accession>
<accession>O55072</accession>
<comment type="function">
    <text evidence="1 6 7 8 9 11 15 16 20">Adapter protein for several members of the tyrosine kinase receptor family. Involved in multiple signaling pathways mediated by Janus kinase (JAK) and receptor tyrosine kinases, including the receptors of insulin (INS), insulin-like growth factor 1 (IGF1), nerve growth factor (NGF), brain-derived neurotrophic factor (BDNF), glial cell line-derived neurotrophic factor (GDNF), platelet-derived growth factor (PDGF) and fibroblast growth factors (FGFs). In growth hormone (GH) signaling, autophosphorylated ('Tyr-813') JAK2 recruits SH2B1, which in turn is phosphorylated by JAK2 on tyrosine residues. These phosphotyrosines form potential binding sites for other signaling proteins. GH also promotes serine/threonine phosphorylation of SH2B1 and these phosphorylated residues may serve to recruit other proteins to the GHR-JAK2-SH2B1 complexes, such as RAC1. In leptin (LEP) signaling, binds to and potentiates the activation of JAK2 by globally enhancing downstream pathways. In response to leptin, binds simultaneously to both, JAK2 and IRS1 or IRS2, thus mediating formation of a complex of JAK2, SH2B1 and IRS1 or IRS2. Mediates tyrosine phosphorylation of IRS1 and IRS2, resulting in activation of the PI 3-kinase pathway. Acts as a positive regulator of NGF-mediated activation of the Akt/Forkhead pathway; prolongs NGF-induced phosphorylation of AKT1 on 'Ser-473' and AKT1 enzymatic activity. Enhances the kinase activity of the cytokine receptor-associated tyrosine kinase JAK2 and of other receptor tyrosine kinases, such as FGFR3 and NTRK1. For JAK2, the mechanism seems to involve dimerization of both, SH2B1 and JAK2. Enhances RET phosphorylation and kinase activity. Isoforms seem to be differentially involved in IGF1 and PDGF-induced mitogenesis (By similarity).</text>
</comment>
<comment type="subunit">
    <text evidence="1 8 9 10 11 12 15 16 17 18 20">Self-associates. Homopentamer. Forms a heteromultimeric complex with SH2B2. Interacts with SH2B2. Isoform 1 interacts via its SH2 domain with JAK2. Isoform 2 interacts via its SH2 domain and its N-terminus with JAK2; the SH2 domain is required for the major interaction with JAK2 phosphorylated on tyrosine residues; the N-terminus provides a low-affinity binding to JAK2 independent of JAK2 phosphorylation. Isoform 1 interacts via its SH2 domain with INSR; the interaction requires receptor activation. Isoform 1 interacts with IGF1R; the interaction requires receptor activation. Isoform 2 interacts via its SH2 domain with FGFR3. Isoform 2 interacts with RET; the interaction requires RET kinase activity. Isoform 2 interacts with RAC1. Isoform 2 interacts with PDGFRA and/or PDGFRB; the interaction requires receptor activation. Interacts with IRS1 and IRS2. Probably part of a complex consisting of INSR, IRS1 and SH2B1. Probably part of a ternary complex consisting of SH2B1, JAK2 and IRS1 or IRS2 (By similarity). May interact with FCER1G. Interacts (via SH2 domain) with NTRK1 (phosphorylated).</text>
</comment>
<comment type="interaction">
    <interactant intactId="EBI-7395583">
        <id>Q62985</id>
    </interactant>
    <interactant intactId="EBI-2480756">
        <id>P07949</id>
        <label>RET</label>
    </interactant>
    <organismsDiffer>true</organismsDiffer>
    <experiments>3</experiments>
</comment>
<comment type="subcellular location">
    <subcellularLocation>
        <location evidence="14">Cytoplasm</location>
    </subcellularLocation>
    <subcellularLocation>
        <location evidence="23">Membrane</location>
    </subcellularLocation>
    <subcellularLocation>
        <location evidence="14">Nucleus</location>
    </subcellularLocation>
    <text>Shuttles between the nucleus and the cytoplasm.</text>
</comment>
<comment type="alternative products">
    <event type="alternative splicing"/>
    <isoform>
        <id>Q62985-1</id>
        <name>1</name>
        <sequence type="displayed"/>
    </isoform>
    <isoform>
        <id>Q62985-2</id>
        <name>2</name>
        <sequence type="described" ref="VSP_032045"/>
    </isoform>
</comment>
<comment type="tissue specificity">
    <text evidence="19">Isoform 1 is ubiquitously expressed. Expressed in epididymal adipose tissue, liver and skeletal muscle.</text>
</comment>
<comment type="PTM">
    <text evidence="7 10 13 16 20">Phosphorylated on tyrosine residues in response to treatment with growth hormone (GH), IFN-gamma (IFNG), BDNF, PDGF and FGF. Phosphorylated on tyrosine residues by JAK2 and JAK1. Phosphorylated on multiple serine and threonine residues in response to treatment with NGF. Phosphorylated on serine residues.</text>
</comment>
<comment type="similarity">
    <text evidence="22">Belongs to the SH2B adapter family.</text>
</comment>
<name>SH2B1_RAT</name>
<evidence type="ECO:0000250" key="1"/>
<evidence type="ECO:0000250" key="2">
    <source>
        <dbReference type="UniProtKB" id="Q91ZM2"/>
    </source>
</evidence>
<evidence type="ECO:0000250" key="3">
    <source>
        <dbReference type="UniProtKB" id="Q9NRF2"/>
    </source>
</evidence>
<evidence type="ECO:0000255" key="4">
    <source>
        <dbReference type="PROSITE-ProRule" id="PRU00191"/>
    </source>
</evidence>
<evidence type="ECO:0000256" key="5">
    <source>
        <dbReference type="SAM" id="MobiDB-lite"/>
    </source>
</evidence>
<evidence type="ECO:0000269" key="6">
    <source>
    </source>
</evidence>
<evidence type="ECO:0000269" key="7">
    <source>
    </source>
</evidence>
<evidence type="ECO:0000269" key="8">
    <source>
    </source>
</evidence>
<evidence type="ECO:0000269" key="9">
    <source>
    </source>
</evidence>
<evidence type="ECO:0000269" key="10">
    <source>
    </source>
</evidence>
<evidence type="ECO:0000269" key="11">
    <source>
    </source>
</evidence>
<evidence type="ECO:0000269" key="12">
    <source>
    </source>
</evidence>
<evidence type="ECO:0000269" key="13">
    <source>
    </source>
</evidence>
<evidence type="ECO:0000269" key="14">
    <source>
    </source>
</evidence>
<evidence type="ECO:0000269" key="15">
    <source>
    </source>
</evidence>
<evidence type="ECO:0000269" key="16">
    <source>
    </source>
</evidence>
<evidence type="ECO:0000269" key="17">
    <source>
    </source>
</evidence>
<evidence type="ECO:0000269" key="18">
    <source>
    </source>
</evidence>
<evidence type="ECO:0000269" key="19">
    <source>
    </source>
</evidence>
<evidence type="ECO:0000269" key="20">
    <source>
    </source>
</evidence>
<evidence type="ECO:0000303" key="21">
    <source>
    </source>
</evidence>
<evidence type="ECO:0000305" key="22"/>
<evidence type="ECO:0000305" key="23">
    <source>
    </source>
</evidence>
<reference key="1">
    <citation type="journal article" date="1995" name="Biotechnology (N.Y.)">
        <title>The yeast tribrid system -- genetic detection of trans-phosphorylated ITAM-SH2-interactions.</title>
        <authorList>
            <person name="Osborne M.A."/>
            <person name="Dalton S."/>
            <person name="Kochan J.P."/>
        </authorList>
    </citation>
    <scope>NUCLEOTIDE SEQUENCE [MRNA] (ISOFORM 1)</scope>
    <scope>INTERACTION WITH FCER1G</scope>
    <source>
        <tissue>Mast cell</tissue>
    </source>
</reference>
<reference key="2">
    <citation type="journal article" date="1997" name="Mol. Cell. Biol.">
        <title>Identification of SH2-Bbeta as a substrate of the tyrosine kinase JAK2 involved in growth hormone signaling.</title>
        <authorList>
            <person name="Rui L."/>
            <person name="Mathews L.S."/>
            <person name="Hotta K."/>
            <person name="Gustafson T.A."/>
            <person name="Carter-Su C."/>
        </authorList>
    </citation>
    <scope>NUCLEOTIDE SEQUENCE [MRNA] (ISOFORM 2)</scope>
    <scope>FUNCTION</scope>
    <scope>PHOSPHORYLATION</scope>
    <scope>INTERACTION WITH JAK2</scope>
    <source>
        <tissue>Kidney</tissue>
    </source>
</reference>
<reference key="3">
    <citation type="journal article" date="1998" name="Biochem. J.">
        <title>SH2-Balpha is an insulin-receptor adapter protein and substrate that interacts with the activation loop of the insulin-receptor kinase.</title>
        <authorList>
            <person name="Kotani K."/>
            <person name="Wilden P."/>
            <person name="Pillay T.S."/>
        </authorList>
    </citation>
    <scope>TISSUE SPECIFICITY</scope>
</reference>
<reference key="4">
    <citation type="journal article" date="1998" name="J. Biol. Chem.">
        <title>Platelet-derived growth factor (PDGF) stimulates the association of SH2-Bbeta with PDGF receptor and phosphorylation of SH2-Bbeta.</title>
        <authorList>
            <person name="Rui L."/>
            <person name="Carter-Su C."/>
        </authorList>
    </citation>
    <scope>INTERACTION WITH PDGFRA/B</scope>
</reference>
<reference key="5">
    <citation type="journal article" date="1998" name="Neuron">
        <title>Identification and characterization of novel substrates of Trk receptors in developing neurons.</title>
        <authorList>
            <person name="Qian X."/>
            <person name="Riccio A."/>
            <person name="Zhang Y."/>
            <person name="Ginty D.D."/>
        </authorList>
    </citation>
    <scope>FUNCTION IN NGF SIGNALING</scope>
    <scope>INTERACTION WITH NTRK1</scope>
    <scope>PHOSPHORYLATION</scope>
</reference>
<reference key="6">
    <citation type="journal article" date="1999" name="J. Biol. Chem.">
        <title>SH2-B, a membrane-associated adapter, is phosphorylated on multiple serines/threonines in response to nerve growth factor by kinases within the MEK/ERK cascade.</title>
        <authorList>
            <person name="Rui L."/>
            <person name="Herrington J."/>
            <person name="Carter-Su C."/>
        </authorList>
    </citation>
    <scope>FUNCTION IN NGF SIGNALING</scope>
    <scope>PHOSPHORYLATION AT SER-96</scope>
    <scope>MUTAGENESIS OF SER-96</scope>
</reference>
<reference key="7">
    <citation type="journal article" date="1999" name="Proc. Natl. Acad. Sci. U.S.A.">
        <title>Identification of SH2-bbeta as a potent cytoplasmic activator of the tyrosine kinase Janus kinase 2.</title>
        <authorList>
            <person name="Rui L."/>
            <person name="Carter-Su C."/>
        </authorList>
    </citation>
    <scope>FUNCTION IN JAK2 ACTIVATION</scope>
    <scope>MUTAGENESIS OF ARG-555</scope>
</reference>
<reference key="8">
    <citation type="journal article" date="2000" name="Mol. Cell. Biol.">
        <title>Differential binding to and regulation of JAK2 by the SH2 domain and N-terminal region of SH2-bbeta.</title>
        <authorList>
            <person name="Rui L."/>
            <person name="Gunter D.R."/>
            <person name="Herrington J."/>
            <person name="Carter-Su C."/>
        </authorList>
    </citation>
    <scope>FUNCTION</scope>
    <scope>INTERACTION WITH JAK2</scope>
    <scope>MUTAGENESIS OF ARG-555</scope>
</reference>
<reference key="9">
    <citation type="journal article" date="2001" name="Mol. Cell. Biol.">
        <title>SH2-B and APS are multimeric adapters that augment TrkA signaling.</title>
        <authorList>
            <person name="Qian X."/>
            <person name="Ginty D.D."/>
        </authorList>
    </citation>
    <scope>FUNCTION</scope>
    <scope>SUBUNIT</scope>
    <scope>INTERACTION WITH SH2B2</scope>
</reference>
<reference key="10">
    <citation type="journal article" date="2002" name="J. Biol. Chem.">
        <title>SH2-B family members differentially regulate JAK family tyrosine kinases.</title>
        <authorList>
            <person name="O'Brien K.B."/>
            <person name="O'Shea J.J."/>
            <person name="Carter-Su C."/>
        </authorList>
    </citation>
    <scope>INTERACTION WITH JAK1; JAK2 AND JAK3</scope>
    <scope>PHOSPHORYLATION</scope>
</reference>
<reference key="11">
    <citation type="journal article" date="2002" name="J. Biol. Chem.">
        <title>SH2-Bbeta is a Rac-binding protein that regulates cell motility.</title>
        <authorList>
            <person name="Diakonova M."/>
            <person name="Gunter D.R."/>
            <person name="Herrington J."/>
            <person name="Carter-Su C."/>
        </authorList>
    </citation>
    <scope>FUNCTION IN ACTIN REORGANIZATION</scope>
    <scope>INTERACTION WITH RAC1</scope>
</reference>
<reference key="12">
    <citation type="journal article" date="2002" name="J. Biol. Chem.">
        <title>Interaction of fibroblast growth factor receptor 3 and the adapter protein SH2-B. A role in STAT5 activation.</title>
        <authorList>
            <person name="Kong M."/>
            <person name="Wang C.S."/>
            <person name="Donoghue D.J."/>
        </authorList>
    </citation>
    <scope>INTERACTION WITH FGFR3</scope>
</reference>
<reference key="13">
    <citation type="journal article" date="2003" name="J. Biol. Chem.">
        <title>YXXL motifs in SH2-Bbeta are phosphorylated by JAK2, JAK1, and platelet-derived growth factor receptor and are required for membrane ruffling.</title>
        <authorList>
            <person name="O'Brien K.B."/>
            <person name="Argetsinger L.S."/>
            <person name="Diakonova M."/>
            <person name="Carter-Su C."/>
        </authorList>
    </citation>
    <scope>PHOSPHORYLATION AT TYR-439 AND TYR-494</scope>
    <scope>MUTAGENESIS OF TYR-439 AND TYR-494</scope>
</reference>
<reference key="14">
    <citation type="journal article" date="2004" name="Mol. Cell. Biol.">
        <title>Adapter protein SH2-B beta undergoes nucleocytoplasmic shuttling: implications for nerve growth factor induction of neuronal differentiation.</title>
        <authorList>
            <person name="Chen L."/>
            <person name="Carter-Su C."/>
        </authorList>
    </citation>
    <scope>SUBCELLULAR LOCATION</scope>
    <scope>MUTAGENESIS OF LEU-231 AND LEU-233</scope>
</reference>
<reference key="15">
    <citation type="journal article" date="2006" name="J. Cell Sci.">
        <title>Interaction of SH2-Bbeta with RET is involved in signaling of GDNF-induced neurite outgrowth.</title>
        <authorList>
            <person name="Zhang Y."/>
            <person name="Zhu W."/>
            <person name="Wang Y.G."/>
            <person name="Liu X.J."/>
            <person name="Jiao L."/>
            <person name="Liu X."/>
            <person name="Zhang Z.H."/>
            <person name="Lu C.L."/>
            <person name="He C."/>
        </authorList>
    </citation>
    <scope>FUNCTION IN GDNF SIGNALING</scope>
    <scope>INTERACTION WITH RET</scope>
</reference>
<reference key="16">
    <citation type="journal article" date="2012" name="Nat. Commun.">
        <title>Quantitative maps of protein phosphorylation sites across 14 different rat organs and tissues.</title>
        <authorList>
            <person name="Lundby A."/>
            <person name="Secher A."/>
            <person name="Lage K."/>
            <person name="Nordsborg N.B."/>
            <person name="Dmytriyev A."/>
            <person name="Lundby C."/>
            <person name="Olsen J.V."/>
        </authorList>
    </citation>
    <scope>IDENTIFICATION BY MASS SPECTROMETRY [LARGE SCALE ANALYSIS]</scope>
</reference>
<sequence length="756" mass="79637">MNGAPSPEDGVFPSPPALPPPPPPSWQEFCESHARAAALDLARRFRLYLASHPQYAEPGAEAAFSGRFAELFLQHFEAEVARASGSLSPPVLAPLSPGVEIPPSHDLSLESCRVGGPLAVLGPSRSSEDLAGPLPSSVSSSTTSSKPKLKKRFSLRSVGRSVRGSVRGILQWRGAVESPSQAGPLETTSGPPVLGGNSNSNSSGGAGTVGRALANDGTSPGERWTHRFERLRLSRGGGTLRDGAGVIQREELLSFMGAEEAAPDPAGVGRGGGAAGLTSGGGGQPQWQKCRLLLRSEGEGGGGSRLEFFVPPKASRPRLSIPCSTITDVRTATALEMPDRENTFVVKVEGPSEYILETTDALHVKAWVSDIQECLSPGPCPAISPRPMTLPLAPGTSFLTKDNTESLELPCLNHSESLPSQDLLLGPSESNDRLSQGAYGGLSDRPSASFSPSSASIAASHFDSMELLPPELPPRIPIEEGPPAGTVHPLSTPYPPLDTPEAATGSFLFQGEAEGGEGDQPLSGYPWFHGMLSRLKAAQLVLEGGTSSHGVFLVRQSETRRGEYVLTFNFQGKAKHLRLSLNEEGQCRVQHLWFQSIFDMLEHFRVHPIPLESGGSSDVVLVSYVPSQRQQERSTSRDPTQPSEPPPWTDPPHPGAEEASGAPEVAAATAAAAKERQEKEKAGGGGVQEELVPMAELVPMAELEEAIAPGTEAQGGAGSSGDLEVSLMVQLQQLPLGGNGEEGGHPRAINNQYSFV</sequence>